<proteinExistence type="inferred from homology"/>
<dbReference type="EMBL" id="AE016795">
    <property type="protein sequence ID" value="AAO10613.1"/>
    <property type="molecule type" value="Genomic_DNA"/>
</dbReference>
<dbReference type="RefSeq" id="WP_011080105.1">
    <property type="nucleotide sequence ID" value="NC_004459.3"/>
</dbReference>
<dbReference type="SMR" id="Q8DAG8"/>
<dbReference type="GeneID" id="93896421"/>
<dbReference type="KEGG" id="vvu:VV1_2233"/>
<dbReference type="HOGENOM" id="CLU_017584_9_4_6"/>
<dbReference type="Proteomes" id="UP000002275">
    <property type="component" value="Chromosome 1"/>
</dbReference>
<dbReference type="GO" id="GO:0005737">
    <property type="term" value="C:cytoplasm"/>
    <property type="evidence" value="ECO:0007669"/>
    <property type="project" value="UniProtKB-SubCell"/>
</dbReference>
<dbReference type="GO" id="GO:0003677">
    <property type="term" value="F:DNA binding"/>
    <property type="evidence" value="ECO:0007669"/>
    <property type="project" value="UniProtKB-KW"/>
</dbReference>
<dbReference type="GO" id="GO:0003700">
    <property type="term" value="F:DNA-binding transcription factor activity"/>
    <property type="evidence" value="ECO:0007669"/>
    <property type="project" value="UniProtKB-UniRule"/>
</dbReference>
<dbReference type="GO" id="GO:0000062">
    <property type="term" value="F:fatty-acyl-CoA binding"/>
    <property type="evidence" value="ECO:0007669"/>
    <property type="project" value="InterPro"/>
</dbReference>
<dbReference type="GO" id="GO:0006631">
    <property type="term" value="P:fatty acid metabolic process"/>
    <property type="evidence" value="ECO:0007669"/>
    <property type="project" value="UniProtKB-KW"/>
</dbReference>
<dbReference type="GO" id="GO:0019217">
    <property type="term" value="P:regulation of fatty acid metabolic process"/>
    <property type="evidence" value="ECO:0007669"/>
    <property type="project" value="UniProtKB-UniRule"/>
</dbReference>
<dbReference type="CDD" id="cd07377">
    <property type="entry name" value="WHTH_GntR"/>
    <property type="match status" value="1"/>
</dbReference>
<dbReference type="Gene3D" id="1.20.120.530">
    <property type="entry name" value="GntR ligand-binding domain-like"/>
    <property type="match status" value="1"/>
</dbReference>
<dbReference type="Gene3D" id="1.10.10.10">
    <property type="entry name" value="Winged helix-like DNA-binding domain superfamily/Winged helix DNA-binding domain"/>
    <property type="match status" value="1"/>
</dbReference>
<dbReference type="HAMAP" id="MF_00696">
    <property type="entry name" value="HTH_FadR"/>
    <property type="match status" value="1"/>
</dbReference>
<dbReference type="InterPro" id="IPR014178">
    <property type="entry name" value="FA-response_TF_FadR"/>
</dbReference>
<dbReference type="InterPro" id="IPR028374">
    <property type="entry name" value="FadR_C"/>
</dbReference>
<dbReference type="InterPro" id="IPR008920">
    <property type="entry name" value="TF_FadR/GntR_C"/>
</dbReference>
<dbReference type="InterPro" id="IPR000524">
    <property type="entry name" value="Tscrpt_reg_HTH_GntR"/>
</dbReference>
<dbReference type="InterPro" id="IPR036388">
    <property type="entry name" value="WH-like_DNA-bd_sf"/>
</dbReference>
<dbReference type="InterPro" id="IPR036390">
    <property type="entry name" value="WH_DNA-bd_sf"/>
</dbReference>
<dbReference type="NCBIfam" id="TIGR02812">
    <property type="entry name" value="fadR_gamma"/>
    <property type="match status" value="1"/>
</dbReference>
<dbReference type="NCBIfam" id="NF003444">
    <property type="entry name" value="PRK04984.1"/>
    <property type="match status" value="1"/>
</dbReference>
<dbReference type="PANTHER" id="PTHR43537:SF52">
    <property type="entry name" value="FATTY ACID METABOLISM REGULATOR PROTEIN"/>
    <property type="match status" value="1"/>
</dbReference>
<dbReference type="PANTHER" id="PTHR43537">
    <property type="entry name" value="TRANSCRIPTIONAL REGULATOR, GNTR FAMILY"/>
    <property type="match status" value="1"/>
</dbReference>
<dbReference type="Pfam" id="PF07840">
    <property type="entry name" value="FadR_C"/>
    <property type="match status" value="1"/>
</dbReference>
<dbReference type="Pfam" id="PF00392">
    <property type="entry name" value="GntR"/>
    <property type="match status" value="1"/>
</dbReference>
<dbReference type="PRINTS" id="PR00035">
    <property type="entry name" value="HTHGNTR"/>
</dbReference>
<dbReference type="SMART" id="SM00345">
    <property type="entry name" value="HTH_GNTR"/>
    <property type="match status" value="1"/>
</dbReference>
<dbReference type="SUPFAM" id="SSF48008">
    <property type="entry name" value="GntR ligand-binding domain-like"/>
    <property type="match status" value="1"/>
</dbReference>
<dbReference type="SUPFAM" id="SSF46785">
    <property type="entry name" value="Winged helix' DNA-binding domain"/>
    <property type="match status" value="1"/>
</dbReference>
<dbReference type="PROSITE" id="PS50949">
    <property type="entry name" value="HTH_GNTR"/>
    <property type="match status" value="1"/>
</dbReference>
<sequence>MVIKAKSPAGFAEKYIIESIWNGRFPPGSILPAERELSELIGVTRTTLREVLQRLARDGWLTIQHGKPTKVNQFMETSGLHILDTLMTLDVDNATNIVEDLLAARTNISPIFMRYAFKVNKENSERTIKTVIDSCEQLVAAESWDAFLSSSPYADKIQQNVKEDNEKDEAKRQEILIAKTFNFYDYMLFQRLAFHSGNQIYGLIFNGLKKLYDRVGSFYFSNPASRELALKFYRQLLLTCESGQREQLPALIRQYGIESAMIWNEMKKQLPTNFTEDDC</sequence>
<protein>
    <recommendedName>
        <fullName evidence="1">Fatty acid metabolism regulator protein</fullName>
    </recommendedName>
</protein>
<gene>
    <name evidence="1" type="primary">fadR</name>
    <name type="ordered locus">VV1_2233</name>
</gene>
<name>FADR_VIBVU</name>
<keyword id="KW-0010">Activator</keyword>
<keyword id="KW-0963">Cytoplasm</keyword>
<keyword id="KW-0238">DNA-binding</keyword>
<keyword id="KW-0276">Fatty acid metabolism</keyword>
<keyword id="KW-0443">Lipid metabolism</keyword>
<keyword id="KW-0678">Repressor</keyword>
<keyword id="KW-0804">Transcription</keyword>
<keyword id="KW-0805">Transcription regulation</keyword>
<organism>
    <name type="scientific">Vibrio vulnificus (strain CMCP6)</name>
    <dbReference type="NCBI Taxonomy" id="216895"/>
    <lineage>
        <taxon>Bacteria</taxon>
        <taxon>Pseudomonadati</taxon>
        <taxon>Pseudomonadota</taxon>
        <taxon>Gammaproteobacteria</taxon>
        <taxon>Vibrionales</taxon>
        <taxon>Vibrionaceae</taxon>
        <taxon>Vibrio</taxon>
    </lineage>
</organism>
<evidence type="ECO:0000255" key="1">
    <source>
        <dbReference type="HAMAP-Rule" id="MF_00696"/>
    </source>
</evidence>
<accession>Q8DAG8</accession>
<comment type="function">
    <text evidence="1">Multifunctional regulator of fatty acid metabolism.</text>
</comment>
<comment type="subunit">
    <text evidence="1">Homodimer.</text>
</comment>
<comment type="subcellular location">
    <subcellularLocation>
        <location evidence="1">Cytoplasm</location>
    </subcellularLocation>
</comment>
<feature type="chain" id="PRO_0000050638" description="Fatty acid metabolism regulator protein">
    <location>
        <begin position="1"/>
        <end position="279"/>
    </location>
</feature>
<feature type="domain" description="HTH gntR-type" evidence="1">
    <location>
        <begin position="6"/>
        <end position="74"/>
    </location>
</feature>
<feature type="DNA-binding region" description="H-T-H motif" evidence="1">
    <location>
        <begin position="34"/>
        <end position="53"/>
    </location>
</feature>
<reference key="1">
    <citation type="submission" date="2002-12" db="EMBL/GenBank/DDBJ databases">
        <title>Complete genome sequence of Vibrio vulnificus CMCP6.</title>
        <authorList>
            <person name="Rhee J.H."/>
            <person name="Kim S.Y."/>
            <person name="Chung S.S."/>
            <person name="Kim J.J."/>
            <person name="Moon Y.H."/>
            <person name="Jeong H."/>
            <person name="Choy H.E."/>
        </authorList>
    </citation>
    <scope>NUCLEOTIDE SEQUENCE [LARGE SCALE GENOMIC DNA]</scope>
    <source>
        <strain>CMCP6</strain>
    </source>
</reference>